<comment type="function">
    <text evidence="1">Catalyzes the reversible isomerization of glucose-6-phosphate to fructose-6-phosphate.</text>
</comment>
<comment type="catalytic activity">
    <reaction evidence="1">
        <text>alpha-D-glucose 6-phosphate = beta-D-fructose 6-phosphate</text>
        <dbReference type="Rhea" id="RHEA:11816"/>
        <dbReference type="ChEBI" id="CHEBI:57634"/>
        <dbReference type="ChEBI" id="CHEBI:58225"/>
        <dbReference type="EC" id="5.3.1.9"/>
    </reaction>
</comment>
<comment type="pathway">
    <text evidence="1">Carbohydrate biosynthesis; gluconeogenesis.</text>
</comment>
<comment type="pathway">
    <text evidence="1">Carbohydrate degradation; glycolysis; D-glyceraldehyde 3-phosphate and glycerone phosphate from D-glucose: step 2/4.</text>
</comment>
<comment type="subcellular location">
    <subcellularLocation>
        <location evidence="1">Cytoplasm</location>
    </subcellularLocation>
</comment>
<comment type="similarity">
    <text evidence="1">Belongs to the GPI family.</text>
</comment>
<evidence type="ECO:0000255" key="1">
    <source>
        <dbReference type="HAMAP-Rule" id="MF_00473"/>
    </source>
</evidence>
<accession>Q5QWW0</accession>
<gene>
    <name evidence="1" type="primary">pgi</name>
    <name type="ordered locus">IL0570</name>
</gene>
<dbReference type="EC" id="5.3.1.9" evidence="1"/>
<dbReference type="EMBL" id="AE017340">
    <property type="protein sequence ID" value="AAV81411.1"/>
    <property type="molecule type" value="Genomic_DNA"/>
</dbReference>
<dbReference type="RefSeq" id="WP_011233828.1">
    <property type="nucleotide sequence ID" value="NC_006512.1"/>
</dbReference>
<dbReference type="SMR" id="Q5QWW0"/>
<dbReference type="STRING" id="283942.IL0570"/>
<dbReference type="GeneID" id="41335721"/>
<dbReference type="KEGG" id="ilo:IL0570"/>
<dbReference type="eggNOG" id="COG0166">
    <property type="taxonomic scope" value="Bacteria"/>
</dbReference>
<dbReference type="HOGENOM" id="CLU_017947_3_1_6"/>
<dbReference type="OrthoDB" id="140919at2"/>
<dbReference type="UniPathway" id="UPA00109">
    <property type="reaction ID" value="UER00181"/>
</dbReference>
<dbReference type="UniPathway" id="UPA00138"/>
<dbReference type="Proteomes" id="UP000001171">
    <property type="component" value="Chromosome"/>
</dbReference>
<dbReference type="GO" id="GO:0005829">
    <property type="term" value="C:cytosol"/>
    <property type="evidence" value="ECO:0007669"/>
    <property type="project" value="TreeGrafter"/>
</dbReference>
<dbReference type="GO" id="GO:0097367">
    <property type="term" value="F:carbohydrate derivative binding"/>
    <property type="evidence" value="ECO:0007669"/>
    <property type="project" value="InterPro"/>
</dbReference>
<dbReference type="GO" id="GO:0004347">
    <property type="term" value="F:glucose-6-phosphate isomerase activity"/>
    <property type="evidence" value="ECO:0007669"/>
    <property type="project" value="UniProtKB-UniRule"/>
</dbReference>
<dbReference type="GO" id="GO:0048029">
    <property type="term" value="F:monosaccharide binding"/>
    <property type="evidence" value="ECO:0007669"/>
    <property type="project" value="TreeGrafter"/>
</dbReference>
<dbReference type="GO" id="GO:0006094">
    <property type="term" value="P:gluconeogenesis"/>
    <property type="evidence" value="ECO:0007669"/>
    <property type="project" value="UniProtKB-UniRule"/>
</dbReference>
<dbReference type="GO" id="GO:0051156">
    <property type="term" value="P:glucose 6-phosphate metabolic process"/>
    <property type="evidence" value="ECO:0007669"/>
    <property type="project" value="TreeGrafter"/>
</dbReference>
<dbReference type="GO" id="GO:0006096">
    <property type="term" value="P:glycolytic process"/>
    <property type="evidence" value="ECO:0007669"/>
    <property type="project" value="UniProtKB-UniRule"/>
</dbReference>
<dbReference type="CDD" id="cd05015">
    <property type="entry name" value="SIS_PGI_1"/>
    <property type="match status" value="1"/>
</dbReference>
<dbReference type="CDD" id="cd05016">
    <property type="entry name" value="SIS_PGI_2"/>
    <property type="match status" value="1"/>
</dbReference>
<dbReference type="Gene3D" id="1.10.1390.10">
    <property type="match status" value="1"/>
</dbReference>
<dbReference type="Gene3D" id="3.40.50.10490">
    <property type="entry name" value="Glucose-6-phosphate isomerase like protein, domain 1"/>
    <property type="match status" value="2"/>
</dbReference>
<dbReference type="HAMAP" id="MF_00473">
    <property type="entry name" value="G6P_isomerase"/>
    <property type="match status" value="1"/>
</dbReference>
<dbReference type="InterPro" id="IPR001672">
    <property type="entry name" value="G6P_Isomerase"/>
</dbReference>
<dbReference type="InterPro" id="IPR023096">
    <property type="entry name" value="G6P_Isomerase_C"/>
</dbReference>
<dbReference type="InterPro" id="IPR018189">
    <property type="entry name" value="Phosphoglucose_isomerase_CS"/>
</dbReference>
<dbReference type="InterPro" id="IPR046348">
    <property type="entry name" value="SIS_dom_sf"/>
</dbReference>
<dbReference type="InterPro" id="IPR035476">
    <property type="entry name" value="SIS_PGI_1"/>
</dbReference>
<dbReference type="InterPro" id="IPR035482">
    <property type="entry name" value="SIS_PGI_2"/>
</dbReference>
<dbReference type="NCBIfam" id="NF001211">
    <property type="entry name" value="PRK00179.1"/>
    <property type="match status" value="1"/>
</dbReference>
<dbReference type="PANTHER" id="PTHR11469">
    <property type="entry name" value="GLUCOSE-6-PHOSPHATE ISOMERASE"/>
    <property type="match status" value="1"/>
</dbReference>
<dbReference type="PANTHER" id="PTHR11469:SF1">
    <property type="entry name" value="GLUCOSE-6-PHOSPHATE ISOMERASE"/>
    <property type="match status" value="1"/>
</dbReference>
<dbReference type="Pfam" id="PF00342">
    <property type="entry name" value="PGI"/>
    <property type="match status" value="1"/>
</dbReference>
<dbReference type="PRINTS" id="PR00662">
    <property type="entry name" value="G6PISOMERASE"/>
</dbReference>
<dbReference type="SUPFAM" id="SSF53697">
    <property type="entry name" value="SIS domain"/>
    <property type="match status" value="1"/>
</dbReference>
<dbReference type="PROSITE" id="PS00765">
    <property type="entry name" value="P_GLUCOSE_ISOMERASE_1"/>
    <property type="match status" value="1"/>
</dbReference>
<dbReference type="PROSITE" id="PS00174">
    <property type="entry name" value="P_GLUCOSE_ISOMERASE_2"/>
    <property type="match status" value="1"/>
</dbReference>
<dbReference type="PROSITE" id="PS51463">
    <property type="entry name" value="P_GLUCOSE_ISOMERASE_3"/>
    <property type="match status" value="1"/>
</dbReference>
<organism>
    <name type="scientific">Idiomarina loihiensis (strain ATCC BAA-735 / DSM 15497 / L2-TR)</name>
    <dbReference type="NCBI Taxonomy" id="283942"/>
    <lineage>
        <taxon>Bacteria</taxon>
        <taxon>Pseudomonadati</taxon>
        <taxon>Pseudomonadota</taxon>
        <taxon>Gammaproteobacteria</taxon>
        <taxon>Alteromonadales</taxon>
        <taxon>Idiomarinaceae</taxon>
        <taxon>Idiomarina</taxon>
    </lineage>
</organism>
<reference key="1">
    <citation type="journal article" date="2004" name="Proc. Natl. Acad. Sci. U.S.A.">
        <title>Genome sequence of the deep-sea gamma-proteobacterium Idiomarina loihiensis reveals amino acid fermentation as a source of carbon and energy.</title>
        <authorList>
            <person name="Hou S."/>
            <person name="Saw J.H."/>
            <person name="Lee K.S."/>
            <person name="Freitas T.A."/>
            <person name="Belisle C."/>
            <person name="Kawarabayasi Y."/>
            <person name="Donachie S.P."/>
            <person name="Pikina A."/>
            <person name="Galperin M.Y."/>
            <person name="Koonin E.V."/>
            <person name="Makarova K.S."/>
            <person name="Omelchenko M.V."/>
            <person name="Sorokin A."/>
            <person name="Wolf Y.I."/>
            <person name="Li Q.X."/>
            <person name="Keum Y.S."/>
            <person name="Campbell S."/>
            <person name="Denery J."/>
            <person name="Aizawa S."/>
            <person name="Shibata S."/>
            <person name="Malahoff A."/>
            <person name="Alam M."/>
        </authorList>
    </citation>
    <scope>NUCLEOTIDE SEQUENCE [LARGE SCALE GENOMIC DNA]</scope>
    <source>
        <strain>ATCC BAA-735 / DSM 15497 / L2-TR</strain>
    </source>
</reference>
<feature type="chain" id="PRO_0000180654" description="Glucose-6-phosphate isomerase">
    <location>
        <begin position="1"/>
        <end position="489"/>
    </location>
</feature>
<feature type="active site" description="Proton donor" evidence="1">
    <location>
        <position position="309"/>
    </location>
</feature>
<feature type="active site" evidence="1">
    <location>
        <position position="340"/>
    </location>
</feature>
<feature type="active site" evidence="1">
    <location>
        <position position="459"/>
    </location>
</feature>
<protein>
    <recommendedName>
        <fullName evidence="1">Glucose-6-phosphate isomerase</fullName>
        <shortName evidence="1">GPI</shortName>
        <ecNumber evidence="1">5.3.1.9</ecNumber>
    </recommendedName>
    <alternativeName>
        <fullName evidence="1">Phosphoglucose isomerase</fullName>
        <shortName evidence="1">PGI</shortName>
    </alternativeName>
    <alternativeName>
        <fullName evidence="1">Phosphohexose isomerase</fullName>
        <shortName evidence="1">PHI</shortName>
    </alternativeName>
</protein>
<name>G6PI_IDILO</name>
<keyword id="KW-0963">Cytoplasm</keyword>
<keyword id="KW-0312">Gluconeogenesis</keyword>
<keyword id="KW-0324">Glycolysis</keyword>
<keyword id="KW-0413">Isomerase</keyword>
<keyword id="KW-1185">Reference proteome</keyword>
<proteinExistence type="inferred from homology"/>
<sequence length="489" mass="54110">MIKNGPYLALDTSYQKLSVDELLETAGKRLPEHFDDYRQQLCRGEYRNISEDRPVTHVLSRSVHAVAKQSNRKTRFVDTVQKLRSGRRLGSTGKPITDVVNIGVGGSDLGPQMGAFALREFANDAALHNLQVHFVSSMDGGQLYAVLPIVDPETTLFIISSKSFGTVDTFANVDTVRKWIEPELTQEQWLENHVIGVSANAQGMTDYGIPPAQQFTFGDGVGGRFSLWSALGLSIALTTGIRPFERMLEGAKAMDEHFLDAPLNENLPVLLALYGVYNREQLGINNLAILPYDGRLRMLPNYLQQLDMESNGKQYTAENEAIDYPTGPIIWGGFGPNGQHAFFQHLHQGYDQFTADFVTVLKREAPGFSDATRSGLAEQQRLAVANCLAHRRLMSDGSENADSPSDHYPGGHPSNLLIMDELTPESFGALIAAYEHKVFTQGVIWGLNSFDQPGVEKGKKIAMDVLRVLDGESDESFDESTDAVIQRMR</sequence>